<evidence type="ECO:0000250" key="1"/>
<evidence type="ECO:0000255" key="2"/>
<evidence type="ECO:0000305" key="3"/>
<reference key="1">
    <citation type="journal article" date="2010" name="Zoology">
        <title>Transcriptome analysis of the venom glands of the Chinese wolf spider Lycosa singoriensis.</title>
        <authorList>
            <person name="Zhang Y."/>
            <person name="Chen J."/>
            <person name="Tang X."/>
            <person name="Wang F."/>
            <person name="Jiang L."/>
            <person name="Xiong X."/>
            <person name="Wang M."/>
            <person name="Rong M."/>
            <person name="Liu Z."/>
            <person name="Liang S."/>
        </authorList>
    </citation>
    <scope>NUCLEOTIDE SEQUENCE [LARGE SCALE MRNA]</scope>
    <source>
        <tissue>Venom gland</tissue>
    </source>
</reference>
<comment type="subcellular location">
    <subcellularLocation>
        <location evidence="1">Secreted</location>
    </subcellularLocation>
</comment>
<comment type="tissue specificity">
    <text>Expressed by the venom gland.</text>
</comment>
<comment type="PTM">
    <text evidence="3">Contains 5 disulfide bonds.</text>
</comment>
<comment type="similarity">
    <text evidence="3">Belongs to the neurotoxin 31 family.</text>
</comment>
<name>TXC02_LYCSI</name>
<sequence>MKFAVILLFSLVVLAVASESVEEVRREIDIEDLPEQQRGCADLRQPCTEGDDCSCCGSEGVCNCSHPHKKGCYCKTAGPLEKLAKKFRGCKNK</sequence>
<keyword id="KW-1015">Disulfide bond</keyword>
<keyword id="KW-0964">Secreted</keyword>
<keyword id="KW-0732">Signal</keyword>
<keyword id="KW-0800">Toxin</keyword>
<feature type="signal peptide" evidence="2">
    <location>
        <begin position="1"/>
        <end position="18"/>
    </location>
</feature>
<feature type="propeptide" id="PRO_0000401847" evidence="1">
    <location>
        <begin position="19"/>
        <end position="38"/>
    </location>
</feature>
<feature type="chain" id="PRO_0000401848" description="U12-lycotoxin-Ls1b">
    <location>
        <begin position="39"/>
        <end position="93"/>
    </location>
</feature>
<accession>B6DD14</accession>
<organism>
    <name type="scientific">Lycosa singoriensis</name>
    <name type="common">Wolf spider</name>
    <name type="synonym">Aranea singoriensis</name>
    <dbReference type="NCBI Taxonomy" id="434756"/>
    <lineage>
        <taxon>Eukaryota</taxon>
        <taxon>Metazoa</taxon>
        <taxon>Ecdysozoa</taxon>
        <taxon>Arthropoda</taxon>
        <taxon>Chelicerata</taxon>
        <taxon>Arachnida</taxon>
        <taxon>Araneae</taxon>
        <taxon>Araneomorphae</taxon>
        <taxon>Entelegynae</taxon>
        <taxon>Lycosoidea</taxon>
        <taxon>Lycosidae</taxon>
        <taxon>Lycosa</taxon>
    </lineage>
</organism>
<protein>
    <recommendedName>
        <fullName>U12-lycotoxin-Ls1b</fullName>
    </recommendedName>
    <alternativeName>
        <fullName>Toxin-like structure LSTX-K2</fullName>
    </alternativeName>
</protein>
<proteinExistence type="evidence at transcript level"/>
<dbReference type="EMBL" id="EU926098">
    <property type="protein sequence ID" value="ACI41430.1"/>
    <property type="molecule type" value="mRNA"/>
</dbReference>
<dbReference type="EMBL" id="FM864102">
    <property type="protein sequence ID" value="CAS03699.1"/>
    <property type="molecule type" value="mRNA"/>
</dbReference>
<dbReference type="SMR" id="B6DD14"/>
<dbReference type="ArachnoServer" id="AS001037">
    <property type="toxin name" value="U12-lycotoxin-Ls1b"/>
</dbReference>
<dbReference type="GO" id="GO:0005576">
    <property type="term" value="C:extracellular region"/>
    <property type="evidence" value="ECO:0007669"/>
    <property type="project" value="UniProtKB-SubCell"/>
</dbReference>
<dbReference type="GO" id="GO:0090729">
    <property type="term" value="F:toxin activity"/>
    <property type="evidence" value="ECO:0007669"/>
    <property type="project" value="UniProtKB-KW"/>
</dbReference>